<accession>Q0D2I5</accession>
<accession>Q24JT6</accession>
<accession>Q7L5J9</accession>
<accession>Q7Z5X4</accession>
<accession>Q9BQ46</accession>
<name>IFFO1_HUMAN</name>
<dbReference type="EMBL" id="CH471116">
    <property type="protein sequence ID" value="EAW88781.1"/>
    <property type="molecule type" value="Genomic_DNA"/>
</dbReference>
<dbReference type="EMBL" id="CH471116">
    <property type="protein sequence ID" value="EAW88783.1"/>
    <property type="molecule type" value="Genomic_DNA"/>
</dbReference>
<dbReference type="EMBL" id="BC002857">
    <property type="protein sequence ID" value="AAH02857.2"/>
    <property type="molecule type" value="mRNA"/>
</dbReference>
<dbReference type="EMBL" id="BC004384">
    <property type="protein sequence ID" value="AAH04384.2"/>
    <property type="molecule type" value="mRNA"/>
</dbReference>
<dbReference type="EMBL" id="BC010431">
    <property type="status" value="NOT_ANNOTATED_CDS"/>
    <property type="molecule type" value="mRNA"/>
</dbReference>
<dbReference type="EMBL" id="BC071170">
    <property type="protein sequence ID" value="AAH71170.1"/>
    <property type="molecule type" value="mRNA"/>
</dbReference>
<dbReference type="EMBL" id="BC103817">
    <property type="protein sequence ID" value="AAI03818.1"/>
    <property type="molecule type" value="mRNA"/>
</dbReference>
<dbReference type="EMBL" id="BC103818">
    <property type="protein sequence ID" value="AAI03819.1"/>
    <property type="molecule type" value="mRNA"/>
</dbReference>
<dbReference type="EMBL" id="BC110387">
    <property type="protein sequence ID" value="AAI10388.1"/>
    <property type="molecule type" value="mRNA"/>
</dbReference>
<dbReference type="EMBL" id="BC113848">
    <property type="protein sequence ID" value="AAI13849.1"/>
    <property type="molecule type" value="mRNA"/>
</dbReference>
<dbReference type="EMBL" id="BC114454">
    <property type="protein sequence ID" value="AAI14455.1"/>
    <property type="molecule type" value="mRNA"/>
</dbReference>
<dbReference type="EMBL" id="AF124432">
    <property type="status" value="NOT_ANNOTATED_CDS"/>
    <property type="molecule type" value="mRNA"/>
</dbReference>
<dbReference type="CCDS" id="CCDS41741.1">
    <molecule id="Q0D2I5-5"/>
</dbReference>
<dbReference type="CCDS" id="CCDS81655.1">
    <molecule id="Q0D2I5-1"/>
</dbReference>
<dbReference type="CCDS" id="CCDS8550.2">
    <molecule id="Q0D2I5-4"/>
</dbReference>
<dbReference type="RefSeq" id="NP_001034759.1">
    <molecule id="Q0D2I5-5"/>
    <property type="nucleotide sequence ID" value="NM_001039670.3"/>
</dbReference>
<dbReference type="RefSeq" id="NP_001317253.1">
    <molecule id="Q0D2I5-1"/>
    <property type="nucleotide sequence ID" value="NM_001330324.2"/>
</dbReference>
<dbReference type="RefSeq" id="NP_542768.2">
    <molecule id="Q0D2I5-4"/>
    <property type="nucleotide sequence ID" value="NM_080730.5"/>
</dbReference>
<dbReference type="RefSeq" id="XP_006719038.1">
    <molecule id="Q0D2I5-7"/>
    <property type="nucleotide sequence ID" value="XM_006718975.5"/>
</dbReference>
<dbReference type="RefSeq" id="XP_054227689.1">
    <molecule id="Q0D2I5-7"/>
    <property type="nucleotide sequence ID" value="XM_054371714.1"/>
</dbReference>
<dbReference type="PDB" id="6ABO">
    <property type="method" value="X-ray"/>
    <property type="resolution" value="2.65 A"/>
    <property type="chains" value="B=450-525"/>
</dbReference>
<dbReference type="PDBsum" id="6ABO"/>
<dbReference type="SMR" id="Q0D2I5"/>
<dbReference type="BioGRID" id="117407">
    <property type="interactions" value="52"/>
</dbReference>
<dbReference type="FunCoup" id="Q0D2I5">
    <property type="interactions" value="1285"/>
</dbReference>
<dbReference type="IntAct" id="Q0D2I5">
    <property type="interactions" value="39"/>
</dbReference>
<dbReference type="STRING" id="9606.ENSP00000482285"/>
<dbReference type="GlyGen" id="Q0D2I5">
    <property type="glycosylation" value="3 sites, 1 O-linked glycan (3 sites)"/>
</dbReference>
<dbReference type="iPTMnet" id="Q0D2I5"/>
<dbReference type="PhosphoSitePlus" id="Q0D2I5"/>
<dbReference type="BioMuta" id="IFFO1"/>
<dbReference type="DMDM" id="259016254"/>
<dbReference type="jPOST" id="Q0D2I5"/>
<dbReference type="MassIVE" id="Q0D2I5"/>
<dbReference type="PaxDb" id="9606-ENSP00000482285"/>
<dbReference type="PeptideAtlas" id="Q0D2I5"/>
<dbReference type="ProteomicsDB" id="58734">
    <molecule id="Q0D2I5-1"/>
</dbReference>
<dbReference type="ProteomicsDB" id="58735">
    <molecule id="Q0D2I5-2"/>
</dbReference>
<dbReference type="ProteomicsDB" id="58736">
    <molecule id="Q0D2I5-3"/>
</dbReference>
<dbReference type="ProteomicsDB" id="58737">
    <molecule id="Q0D2I5-4"/>
</dbReference>
<dbReference type="ProteomicsDB" id="58738">
    <molecule id="Q0D2I5-5"/>
</dbReference>
<dbReference type="ProteomicsDB" id="58739">
    <molecule id="Q0D2I5-6"/>
</dbReference>
<dbReference type="ProteomicsDB" id="58740">
    <molecule id="Q0D2I5-7"/>
</dbReference>
<dbReference type="Pumba" id="Q0D2I5"/>
<dbReference type="Antibodypedia" id="22511">
    <property type="antibodies" value="62 antibodies from 18 providers"/>
</dbReference>
<dbReference type="DNASU" id="25900"/>
<dbReference type="Ensembl" id="ENST00000336604.8">
    <molecule id="Q0D2I5-4"/>
    <property type="protein sequence ID" value="ENSP00000337593.4"/>
    <property type="gene ID" value="ENSG00000010295.20"/>
</dbReference>
<dbReference type="Ensembl" id="ENST00000356896.8">
    <molecule id="Q0D2I5-5"/>
    <property type="protein sequence ID" value="ENSP00000349364.4"/>
    <property type="gene ID" value="ENSG00000010295.20"/>
</dbReference>
<dbReference type="Ensembl" id="ENST00000396840.6">
    <molecule id="Q0D2I5-1"/>
    <property type="protein sequence ID" value="ENSP00000380052.2"/>
    <property type="gene ID" value="ENSG00000010295.20"/>
</dbReference>
<dbReference type="Ensembl" id="ENST00000487279.6">
    <molecule id="Q0D2I5-3"/>
    <property type="protein sequence ID" value="ENSP00000432493.2"/>
    <property type="gene ID" value="ENSG00000010295.20"/>
</dbReference>
<dbReference type="GeneID" id="25900"/>
<dbReference type="KEGG" id="hsa:25900"/>
<dbReference type="UCSC" id="uc001qpc.3">
    <molecule id="Q0D2I5-1"/>
    <property type="organism name" value="human"/>
</dbReference>
<dbReference type="AGR" id="HGNC:24970"/>
<dbReference type="CTD" id="25900"/>
<dbReference type="DisGeNET" id="25900"/>
<dbReference type="GeneCards" id="IFFO1"/>
<dbReference type="HGNC" id="HGNC:24970">
    <property type="gene designation" value="IFFO1"/>
</dbReference>
<dbReference type="HPA" id="ENSG00000010295">
    <property type="expression patterns" value="Low tissue specificity"/>
</dbReference>
<dbReference type="MIM" id="610495">
    <property type="type" value="gene"/>
</dbReference>
<dbReference type="neXtProt" id="NX_Q0D2I5"/>
<dbReference type="OpenTargets" id="ENSG00000010295"/>
<dbReference type="PharmGKB" id="PA164720809"/>
<dbReference type="VEuPathDB" id="HostDB:ENSG00000010295"/>
<dbReference type="eggNOG" id="ENOG502QRD7">
    <property type="taxonomic scope" value="Eukaryota"/>
</dbReference>
<dbReference type="GeneTree" id="ENSGT00510000046803"/>
<dbReference type="HOGENOM" id="CLU_085236_0_0_1"/>
<dbReference type="InParanoid" id="Q0D2I5"/>
<dbReference type="OrthoDB" id="9946830at2759"/>
<dbReference type="PAN-GO" id="Q0D2I5">
    <property type="GO annotations" value="0 GO annotations based on evolutionary models"/>
</dbReference>
<dbReference type="PhylomeDB" id="Q0D2I5"/>
<dbReference type="TreeFam" id="TF331217"/>
<dbReference type="PathwayCommons" id="Q0D2I5"/>
<dbReference type="SignaLink" id="Q0D2I5"/>
<dbReference type="BioGRID-ORCS" id="25900">
    <property type="hits" value="16 hits in 1144 CRISPR screens"/>
</dbReference>
<dbReference type="ChiTaRS" id="IFFO1">
    <property type="organism name" value="human"/>
</dbReference>
<dbReference type="GenomeRNAi" id="25900"/>
<dbReference type="Pharos" id="Q0D2I5">
    <property type="development level" value="Tbio"/>
</dbReference>
<dbReference type="PRO" id="PR:Q0D2I5"/>
<dbReference type="Proteomes" id="UP000005640">
    <property type="component" value="Chromosome 12"/>
</dbReference>
<dbReference type="RNAct" id="Q0D2I5">
    <property type="molecule type" value="protein"/>
</dbReference>
<dbReference type="Bgee" id="ENSG00000010295">
    <property type="expression patterns" value="Expressed in tendon of biceps brachii and 196 other cell types or tissues"/>
</dbReference>
<dbReference type="ExpressionAtlas" id="Q0D2I5">
    <property type="expression patterns" value="baseline and differential"/>
</dbReference>
<dbReference type="GO" id="GO:0005882">
    <property type="term" value="C:intermediate filament"/>
    <property type="evidence" value="ECO:0007669"/>
    <property type="project" value="UniProtKB-KW"/>
</dbReference>
<dbReference type="GO" id="GO:0005637">
    <property type="term" value="C:nuclear inner membrane"/>
    <property type="evidence" value="ECO:0007669"/>
    <property type="project" value="UniProtKB-SubCell"/>
</dbReference>
<dbReference type="GO" id="GO:0016363">
    <property type="term" value="C:nuclear matrix"/>
    <property type="evidence" value="ECO:0000314"/>
    <property type="project" value="UniProtKB"/>
</dbReference>
<dbReference type="GO" id="GO:0005654">
    <property type="term" value="C:nucleoplasm"/>
    <property type="evidence" value="ECO:0000314"/>
    <property type="project" value="UniProtKB"/>
</dbReference>
<dbReference type="GO" id="GO:0035861">
    <property type="term" value="C:site of double-strand break"/>
    <property type="evidence" value="ECO:0000314"/>
    <property type="project" value="UniProtKB"/>
</dbReference>
<dbReference type="GO" id="GO:1990683">
    <property type="term" value="P:DNA double-strand break attachment to nuclear envelope"/>
    <property type="evidence" value="ECO:0000314"/>
    <property type="project" value="UniProtKB"/>
</dbReference>
<dbReference type="GO" id="GO:0006303">
    <property type="term" value="P:double-strand break repair via nonhomologous end joining"/>
    <property type="evidence" value="ECO:0000315"/>
    <property type="project" value="UniProtKB"/>
</dbReference>
<dbReference type="GO" id="GO:1990166">
    <property type="term" value="P:protein localization to site of double-strand break"/>
    <property type="evidence" value="ECO:0000315"/>
    <property type="project" value="UniProtKB"/>
</dbReference>
<dbReference type="Gene3D" id="1.20.5.170">
    <property type="match status" value="1"/>
</dbReference>
<dbReference type="Gene3D" id="1.20.5.1160">
    <property type="entry name" value="Vasodilator-stimulated phosphoprotein"/>
    <property type="match status" value="1"/>
</dbReference>
<dbReference type="InterPro" id="IPR039008">
    <property type="entry name" value="IF_rod_dom"/>
</dbReference>
<dbReference type="PANTHER" id="PTHR14516">
    <property type="entry name" value="1-PYRROLINE-5-CARBOXYLATE DEHYDROGENASE FAMILY MEMBER"/>
    <property type="match status" value="1"/>
</dbReference>
<dbReference type="PANTHER" id="PTHR14516:SF2">
    <property type="entry name" value="NON-HOMOLOGOUS END JOINING FACTOR IFFO1"/>
    <property type="match status" value="1"/>
</dbReference>
<dbReference type="SMART" id="SM01391">
    <property type="entry name" value="Filament"/>
    <property type="match status" value="1"/>
</dbReference>
<dbReference type="SUPFAM" id="SSF64593">
    <property type="entry name" value="Intermediate filament protein, coiled coil region"/>
    <property type="match status" value="1"/>
</dbReference>
<dbReference type="PROSITE" id="PS51842">
    <property type="entry name" value="IF_ROD_2"/>
    <property type="match status" value="1"/>
</dbReference>
<feature type="chain" id="PRO_0000316794" description="Non-homologous end joining factor IFFO1">
    <location>
        <begin position="1"/>
        <end position="559"/>
    </location>
</feature>
<feature type="domain" description="IF rod" evidence="2">
    <location>
        <begin position="73"/>
        <end position="526"/>
    </location>
</feature>
<feature type="region of interest" description="Disordered" evidence="3">
    <location>
        <begin position="21"/>
        <end position="57"/>
    </location>
</feature>
<feature type="region of interest" description="LMNA binding" evidence="5">
    <location>
        <begin position="65"/>
        <end position="116"/>
    </location>
</feature>
<feature type="region of interest" description="Disordered" evidence="3">
    <location>
        <begin position="158"/>
        <end position="187"/>
    </location>
</feature>
<feature type="region of interest" description="Disordered" evidence="3">
    <location>
        <begin position="360"/>
        <end position="394"/>
    </location>
</feature>
<feature type="region of interest" description="XCCR4 binding. Required for localization to the double-strand breaks (DSBs)" evidence="5">
    <location>
        <begin position="450"/>
        <end position="525"/>
    </location>
</feature>
<feature type="region of interest" description="Disordered" evidence="3">
    <location>
        <begin position="520"/>
        <end position="559"/>
    </location>
</feature>
<feature type="coiled-coil region" evidence="1">
    <location>
        <begin position="85"/>
        <end position="117"/>
    </location>
</feature>
<feature type="coiled-coil region" evidence="1">
    <location>
        <begin position="237"/>
        <end position="301"/>
    </location>
</feature>
<feature type="coiled-coil region" evidence="1">
    <location>
        <begin position="455"/>
        <end position="501"/>
    </location>
</feature>
<feature type="compositionally biased region" description="Pro residues" evidence="3">
    <location>
        <begin position="39"/>
        <end position="57"/>
    </location>
</feature>
<feature type="compositionally biased region" description="Basic and acidic residues" evidence="3">
    <location>
        <begin position="550"/>
        <end position="559"/>
    </location>
</feature>
<feature type="splice variant" id="VSP_030781" description="In isoform 2 and isoform 6." evidence="7">
    <location>
        <begin position="1"/>
        <end position="360"/>
    </location>
</feature>
<feature type="splice variant" id="VSP_030782" description="In isoform 3." evidence="7">
    <original>WEEEYT</original>
    <variation>CFYRVK</variation>
    <location>
        <begin position="259"/>
        <end position="264"/>
    </location>
</feature>
<feature type="splice variant" id="VSP_030783" description="In isoform 3." evidence="7">
    <location>
        <begin position="265"/>
        <end position="559"/>
    </location>
</feature>
<feature type="splice variant" id="VSP_030784" description="In isoform 4 and isoform 5." evidence="6 7">
    <original>Q</original>
    <variation>QKKL</variation>
    <location>
        <position position="357"/>
    </location>
</feature>
<feature type="splice variant" id="VSP_039709" description="In isoform 7." evidence="7">
    <original>Q</original>
    <variation>QKL</variation>
    <location>
        <position position="357"/>
    </location>
</feature>
<feature type="splice variant" id="VSP_038240" description="In isoform 5, isoform 6 and isoform 7." evidence="7">
    <original>Q</original>
    <variation>QQ</variation>
    <location>
        <position position="451"/>
    </location>
</feature>
<feature type="mutagenesis site" description="Does not affect the interaction with LMNA." evidence="5">
    <original>A</original>
    <variation>P</variation>
    <variation>V</variation>
    <location>
        <position position="65"/>
    </location>
</feature>
<feature type="mutagenesis site" description="Decreased interaction with LMNA. Loss of ability to immobilize broken ends; when associated with H-85." evidence="5">
    <original>N</original>
    <variation>D</variation>
    <location>
        <position position="73"/>
    </location>
</feature>
<feature type="mutagenesis site" description="Does not affect the interaction with LMNA." evidence="5">
    <original>N</original>
    <variation>K</variation>
    <location>
        <position position="73"/>
    </location>
</feature>
<feature type="mutagenesis site" description="Decreased interaction with LMNA." evidence="5">
    <original>R</original>
    <variation>H</variation>
    <location>
        <position position="85"/>
    </location>
</feature>
<feature type="mutagenesis site" description="Does not affect the interaction with LMNA." evidence="5">
    <original>A</original>
    <variation>T</variation>
    <variation>V</variation>
    <location>
        <position position="89"/>
    </location>
</feature>
<feature type="mutagenesis site" description="Loss of interaction with XRCC4; when associated with R-487." evidence="5">
    <original>I</original>
    <variation>R</variation>
    <location>
        <position position="480"/>
    </location>
</feature>
<feature type="mutagenesis site" description="Loss of interaction with XRCC4; when associated with R-480." evidence="5">
    <original>A</original>
    <variation>R</variation>
    <location>
        <position position="487"/>
    </location>
</feature>
<feature type="mutagenesis site" description="Decreased interaction with XRCC4; when associated with A-516. Loss of interaction with XRCC4; when associated with A-509 and A-516." evidence="5">
    <original>D</original>
    <variation>A</variation>
    <location>
        <position position="490"/>
    </location>
</feature>
<feature type="mutagenesis site" description="Loss of interaction with XRCC4; when associated with A-490 and A-516." evidence="5">
    <original>D</original>
    <variation>A</variation>
    <location>
        <position position="509"/>
    </location>
</feature>
<feature type="mutagenesis site" description="Loss of interaction with XRCC4." evidence="5">
    <original>M</original>
    <variation>R</variation>
    <location>
        <position position="512"/>
    </location>
</feature>
<feature type="mutagenesis site" description="Loss of interaction with XRCC4, loss of localization at the sites of DNA damages and loss of ability to immobilize broken ends." evidence="5">
    <original>C</original>
    <variation>R</variation>
    <location>
        <position position="515"/>
    </location>
</feature>
<feature type="mutagenesis site" description="Decreased interaction with XRCC4; when associated with A-490. Loss of interaction with XRCC4; when associated with A-490 and A-509." evidence="5">
    <original>R</original>
    <variation>A</variation>
    <location>
        <position position="516"/>
    </location>
</feature>
<feature type="sequence conflict" description="In Ref. 3; AF124432." evidence="9" ref="3">
    <original>SA</original>
    <variation>LE</variation>
    <location>
        <begin position="152"/>
        <end position="153"/>
    </location>
</feature>
<feature type="sequence conflict" description="In Ref. 3; AF124432." evidence="9" ref="3">
    <original>A</original>
    <variation>V</variation>
    <location>
        <position position="285"/>
    </location>
</feature>
<feature type="sequence conflict" description="In Ref. 2; AAI10388." evidence="9" ref="2">
    <original>V</original>
    <variation>F</variation>
    <location>
        <position position="358"/>
    </location>
</feature>
<feature type="sequence conflict" description="In Ref. 3; AF124432." evidence="9" ref="3">
    <original>P</original>
    <variation>A</variation>
    <location>
        <position position="387"/>
    </location>
</feature>
<feature type="sequence conflict" description="In Ref. 3; AF124432." evidence="9" ref="3">
    <original>K</original>
    <variation>M</variation>
    <location>
        <position position="471"/>
    </location>
</feature>
<feature type="sequence conflict" description="In Ref. 3; AF124432." evidence="9" ref="3">
    <original>Q</original>
    <variation>H</variation>
    <location>
        <position position="474"/>
    </location>
</feature>
<feature type="helix" evidence="12">
    <location>
        <begin position="450"/>
        <end position="504"/>
    </location>
</feature>
<feature type="helix" evidence="12">
    <location>
        <begin position="506"/>
        <end position="519"/>
    </location>
</feature>
<reference key="1">
    <citation type="submission" date="2005-09" db="EMBL/GenBank/DDBJ databases">
        <authorList>
            <person name="Mural R.J."/>
            <person name="Istrail S."/>
            <person name="Sutton G.G."/>
            <person name="Florea L."/>
            <person name="Halpern A.L."/>
            <person name="Mobarry C.M."/>
            <person name="Lippert R."/>
            <person name="Walenz B."/>
            <person name="Shatkay H."/>
            <person name="Dew I."/>
            <person name="Miller J.R."/>
            <person name="Flanigan M.J."/>
            <person name="Edwards N.J."/>
            <person name="Bolanos R."/>
            <person name="Fasulo D."/>
            <person name="Halldorsson B.V."/>
            <person name="Hannenhalli S."/>
            <person name="Turner R."/>
            <person name="Yooseph S."/>
            <person name="Lu F."/>
            <person name="Nusskern D.R."/>
            <person name="Shue B.C."/>
            <person name="Zheng X.H."/>
            <person name="Zhong F."/>
            <person name="Delcher A.L."/>
            <person name="Huson D.H."/>
            <person name="Kravitz S.A."/>
            <person name="Mouchard L."/>
            <person name="Reinert K."/>
            <person name="Remington K.A."/>
            <person name="Clark A.G."/>
            <person name="Waterman M.S."/>
            <person name="Eichler E.E."/>
            <person name="Adams M.D."/>
            <person name="Hunkapiller M.W."/>
            <person name="Myers E.W."/>
            <person name="Venter J.C."/>
        </authorList>
    </citation>
    <scope>NUCLEOTIDE SEQUENCE [LARGE SCALE GENOMIC DNA]</scope>
</reference>
<reference key="2">
    <citation type="journal article" date="2004" name="Genome Res.">
        <title>The status, quality, and expansion of the NIH full-length cDNA project: the Mammalian Gene Collection (MGC).</title>
        <authorList>
            <consortium name="The MGC Project Team"/>
        </authorList>
    </citation>
    <scope>NUCLEOTIDE SEQUENCE [LARGE SCALE MRNA] (ISOFORMS 2; 3; 5; 6 AND 7)</scope>
    <source>
        <tissue>Brain</tissue>
        <tissue>Placenta</tissue>
        <tissue>Skin</tissue>
    </source>
</reference>
<reference key="3">
    <citation type="journal article" date="2002" name="Oncogene">
        <title>A novel tumour associated leucine zipper protein targeting to sites of gene transcription and splicing.</title>
        <authorList>
            <person name="Tuereci O."/>
            <person name="Sahin U."/>
            <person name="Koslowski M."/>
            <person name="Buss B."/>
            <person name="Bell C."/>
            <person name="Ballweber P."/>
            <person name="Zwick C."/>
            <person name="Eberle T."/>
            <person name="Zuber M."/>
            <person name="Villena-Heinsen C."/>
            <person name="Seitz G."/>
            <person name="Pfreundschuh M."/>
        </authorList>
    </citation>
    <scope>NUCLEOTIDE SEQUENCE [MRNA] OF 102-559 (ISOFORM 4)</scope>
    <scope>TISSUE SPECIFICITY</scope>
    <source>
        <tissue>Testis</tissue>
    </source>
</reference>
<reference evidence="11" key="4">
    <citation type="journal article" date="2019" name="Nat. Cell Biol.">
        <title>The nucleoskeleton protein IFFO1 immobilizes broken DNA and suppresses chromosome translocation during tumorigenesis.</title>
        <authorList>
            <person name="Li W."/>
            <person name="Bai X."/>
            <person name="Li J."/>
            <person name="Zhao Y."/>
            <person name="Liu J."/>
            <person name="Zhao H."/>
            <person name="Liu L."/>
            <person name="Ding M."/>
            <person name="Wang Q."/>
            <person name="Shi F.Y."/>
            <person name="Hou M."/>
            <person name="Ji J."/>
            <person name="Gao G."/>
            <person name="Guo R."/>
            <person name="Sun Y."/>
            <person name="Liu Y."/>
            <person name="Xu D."/>
        </authorList>
    </citation>
    <scope>X-RAY CRYSTALLOGRAPHY (2.65 ANGSTROMS) OF 450-525 IN COMPLEX WITH XRCC4</scope>
    <scope>FUNCTION</scope>
    <scope>SUBCELLULAR LOCATION</scope>
    <scope>INTERACTION WITH XRCC4 AND LMNA</scope>
    <scope>MUTAGENESIS OF ALA-65; ASN-73; ARG-85; ALA-89; 450-GLU--ARG-525; ILE-480; ALA-487; ASP-490; ASP-509; MET-512; CYS-515 AND ARG-516</scope>
</reference>
<organism>
    <name type="scientific">Homo sapiens</name>
    <name type="common">Human</name>
    <dbReference type="NCBI Taxonomy" id="9606"/>
    <lineage>
        <taxon>Eukaryota</taxon>
        <taxon>Metazoa</taxon>
        <taxon>Chordata</taxon>
        <taxon>Craniata</taxon>
        <taxon>Vertebrata</taxon>
        <taxon>Euteleostomi</taxon>
        <taxon>Mammalia</taxon>
        <taxon>Eutheria</taxon>
        <taxon>Euarchontoglires</taxon>
        <taxon>Primates</taxon>
        <taxon>Haplorrhini</taxon>
        <taxon>Catarrhini</taxon>
        <taxon>Hominidae</taxon>
        <taxon>Homo</taxon>
    </lineage>
</organism>
<evidence type="ECO:0000255" key="1"/>
<evidence type="ECO:0000255" key="2">
    <source>
        <dbReference type="PROSITE-ProRule" id="PRU01188"/>
    </source>
</evidence>
<evidence type="ECO:0000256" key="3">
    <source>
        <dbReference type="SAM" id="MobiDB-lite"/>
    </source>
</evidence>
<evidence type="ECO:0000269" key="4">
    <source>
    </source>
</evidence>
<evidence type="ECO:0000269" key="5">
    <source>
    </source>
</evidence>
<evidence type="ECO:0000303" key="6">
    <source>
    </source>
</evidence>
<evidence type="ECO:0000303" key="7">
    <source>
    </source>
</evidence>
<evidence type="ECO:0000303" key="8">
    <source>
    </source>
</evidence>
<evidence type="ECO:0000305" key="9"/>
<evidence type="ECO:0000312" key="10">
    <source>
        <dbReference type="HGNC" id="HGNC:24970"/>
    </source>
</evidence>
<evidence type="ECO:0007744" key="11">
    <source>
        <dbReference type="PDB" id="6ABO"/>
    </source>
</evidence>
<evidence type="ECO:0007829" key="12">
    <source>
        <dbReference type="PDB" id="6ABO"/>
    </source>
</evidence>
<gene>
    <name evidence="10" type="primary">IFFO1</name>
    <name type="synonym">IFFO</name>
</gene>
<comment type="function">
    <text evidence="5">Nuclear matrix protein involved in the immobilization of broken DNA ends and the suppression of chromosome translocation during DNA double-strand breaks (DSBs) (PubMed:31548606). Interacts with the nuclear lamina component LMNA, resulting in the formation of a nucleoskeleton that relocalizes to the DSB sites in a XRCC4-dependent manner and promotes the immobilization of the broken ends, thereby preventing chromosome translocation (PubMed:31548606). Acts as a scaffold that allows the DNA repair protein XRCC4 and LMNA to assemble into a complex at the DSB sites (PubMed:31548606).</text>
</comment>
<comment type="subunit">
    <text evidence="5">Forms a heterotetramer with XRCC4 (PubMed:31548606). The interaction with XRCC4 is direct, involves LIG4-free XRCC4 and leads to relocalization of IFFO1 at the double-strand break (DSB) sites (PubMed:31548606). Interacts with LMNA; the interaction forms an interior nucleoskeleton and the recruitment to DNA double-strand breaks (PubMed:31548606).</text>
</comment>
<comment type="interaction">
    <interactant intactId="EBI-742894">
        <id>Q0D2I5</id>
    </interactant>
    <interactant intactId="EBI-351953">
        <id>P02545-2</id>
        <label>LMNA</label>
    </interactant>
    <organismsDiffer>false</organismsDiffer>
    <experiments>2</experiments>
</comment>
<comment type="interaction">
    <interactant intactId="EBI-742894">
        <id>Q0D2I5</id>
    </interactant>
    <interactant intactId="EBI-717592">
        <id>Q13426</id>
        <label>XRCC4</label>
    </interactant>
    <organismsDiffer>false</organismsDiffer>
    <experiments>7</experiments>
</comment>
<comment type="interaction">
    <interactant intactId="EBI-21251044">
        <id>Q0D2I5-5</id>
    </interactant>
    <interactant intactId="EBI-351935">
        <id>P02545</id>
        <label>LMNA</label>
    </interactant>
    <organismsDiffer>false</organismsDiffer>
    <experiments>4</experiments>
</comment>
<comment type="interaction">
    <interactant intactId="EBI-21251044">
        <id>Q0D2I5-5</id>
    </interactant>
    <interactant intactId="EBI-717592">
        <id>Q13426</id>
        <label>XRCC4</label>
    </interactant>
    <organismsDiffer>false</organismsDiffer>
    <experiments>4</experiments>
</comment>
<comment type="subcellular location">
    <subcellularLocation>
        <location evidence="5">Nucleus</location>
    </subcellularLocation>
    <subcellularLocation>
        <location evidence="5">Nucleus</location>
        <location evidence="5">Nucleoplasm</location>
    </subcellularLocation>
    <subcellularLocation>
        <location evidence="5">Nucleus inner membrane</location>
    </subcellularLocation>
    <subcellularLocation>
        <location evidence="5">Nucleus matrix</location>
    </subcellularLocation>
    <text evidence="5">Mainly soluble, the remaining is localized in the nuclear matrix (PubMed:31548606). Localized at double-strand break (DSB) sites near the lamina and nuclear matrix structures (PubMed:31548606).</text>
</comment>
<comment type="alternative products">
    <event type="alternative splicing"/>
    <isoform>
        <id>Q0D2I5-1</id>
        <name>1</name>
        <sequence type="displayed"/>
    </isoform>
    <isoform>
        <id>Q0D2I5-2</id>
        <name>2</name>
        <sequence type="described" ref="VSP_030781"/>
    </isoform>
    <isoform>
        <id>Q0D2I5-3</id>
        <name>3</name>
        <sequence type="described" ref="VSP_030782 VSP_030783"/>
    </isoform>
    <isoform>
        <id>Q0D2I5-4</id>
        <name>4</name>
        <sequence type="described" ref="VSP_030784"/>
    </isoform>
    <isoform>
        <id>Q0D2I5-5</id>
        <name>5</name>
        <sequence type="described" ref="VSP_030784 VSP_038240"/>
    </isoform>
    <isoform>
        <id>Q0D2I5-6</id>
        <name>6</name>
        <sequence type="described" ref="VSP_030781 VSP_038240"/>
    </isoform>
    <isoform>
        <id>Q0D2I5-7</id>
        <name>7</name>
        <sequence type="described" ref="VSP_039709 VSP_038240"/>
    </isoform>
</comment>
<comment type="tissue specificity">
    <text evidence="4">Ubiquitously expressed.</text>
</comment>
<comment type="miscellaneous">
    <molecule>Isoform 3</molecule>
    <text evidence="9">May be produced at very low levels due to a premature stop codon in the mRNA, leading to nonsense-mediated mRNA decay.</text>
</comment>
<comment type="similarity">
    <text evidence="2">Belongs to the intermediate filament family.</text>
</comment>
<comment type="sequence caution" evidence="9">
    <conflict type="frameshift">
        <sequence resource="EMBL" id="AF124432"/>
    </conflict>
</comment>
<keyword id="KW-0002">3D-structure</keyword>
<keyword id="KW-0025">Alternative splicing</keyword>
<keyword id="KW-0175">Coiled coil</keyword>
<keyword id="KW-0403">Intermediate filament</keyword>
<keyword id="KW-0472">Membrane</keyword>
<keyword id="KW-0539">Nucleus</keyword>
<keyword id="KW-1267">Proteomics identification</keyword>
<keyword id="KW-1185">Reference proteome</keyword>
<proteinExistence type="evidence at protein level"/>
<sequence length="559" mass="61979">MNPLFGPNLFLLQQEQQGLAGPLGDSLGGDHFAGGGDLPPAPLSPAGPAAYSPPGPGPAPPAAMALRNDLGSNINVLKTLNLRFRCFLAKVHELERRNRLLEKQLQQALEEGKQGRRGLGRRDQAVQTGFVSPIRPLGLQLGARPAAVCSPSARVLGSPARSPAGPLAPSAASLSSSSTSTSTTYSSSARFMPGTIWSFSHARRLGPGLEPTLVQGPGLSWVHPDGVGVQIDTITPEIRALYNVLAKVKRERDEYKRRWEEEYTVRIQLQDRVNELQEEAQEADACQEELALKVEQLKAELVVFKGLMSNNLSELDTKIQEKAMKVDMDICRRIDITAKLCDVAQQRNCEDMIQMFQVPSMGGRKRERKAAVEEDTSLSESEGPRQPDGDEEESTALSINEEMQRMLNQLREYDFEDDCDSLTWEETEETLLLWEDFSGYAMAAAEAQGEQEDSLEKVIKDTESLFKTREKEYQETIDQIELELATAKNDMNRHLHEYMEMCSMKRGLDVQMETCRRLITQSGDRKSPAFTAVPLSDPPPPPSEAEDSDRDVSSDSSMR</sequence>
<protein>
    <recommendedName>
        <fullName evidence="8">Non-homologous end joining factor IFFO1</fullName>
        <shortName evidence="8">NHEJ factor IFFO1</shortName>
    </recommendedName>
    <alternativeName>
        <fullName evidence="8">Intermediate filament family orphan 1</fullName>
    </alternativeName>
    <alternativeName>
        <fullName evidence="6">Tumor antigen HOM-TES-103</fullName>
    </alternativeName>
</protein>